<sequence>MSTPVLELRGIVKTFGATRALDGASLRVAAGSVHGLVGENGAGKSTLIKVLAGIHRPDAGSLLLDGQPHGHFSPRQVERLGIGFIHQERLLPARFTVGEALFFGHERRFGPLLDRRSQQREAARLLDDYFGLRLPANALIGELSSAEQQMVQIVRALLIKPRVLVFDEPSVALVQREVERLLRIVQRLRDDGLAIVYISHYLQEIEALCDRVTVLRNGRDVAEVSPRNTSLEQITRLMVNREVGELYPKVAVPAGALLLDVRGLGRARAYQGIDLQVRRGEIVGLTGLVGSGAKELLRSLFGLAPPDSGEVRLDGQPLSLRSPREAVAQGVALMPEERRRQGVALDLSVQENTTLAALSRFVRLGLLSPARERHTTLELIERLRIKAHGAHAKVRQLSGGNQQKVALAKWFARCSSLYLLDEPSVGIDVGAKVEIYRLIGELVKEGAGVLILSSDLPELIGLCDRIHVMHRGAIAARFAAGEANSDRLLAVATGAQRAQNEERPFYAYAIAI</sequence>
<keyword id="KW-0067">ATP-binding</keyword>
<keyword id="KW-0997">Cell inner membrane</keyword>
<keyword id="KW-1003">Cell membrane</keyword>
<keyword id="KW-0472">Membrane</keyword>
<keyword id="KW-0547">Nucleotide-binding</keyword>
<keyword id="KW-1185">Reference proteome</keyword>
<keyword id="KW-0677">Repeat</keyword>
<keyword id="KW-0762">Sugar transport</keyword>
<keyword id="KW-1278">Translocase</keyword>
<keyword id="KW-0813">Transport</keyword>
<evidence type="ECO:0000255" key="1">
    <source>
        <dbReference type="HAMAP-Rule" id="MF_01716"/>
    </source>
</evidence>
<gene>
    <name evidence="1" type="primary">rbsA</name>
    <name type="ordered locus">PP_2759</name>
</gene>
<reference key="1">
    <citation type="journal article" date="2002" name="Environ. Microbiol.">
        <title>Complete genome sequence and comparative analysis of the metabolically versatile Pseudomonas putida KT2440.</title>
        <authorList>
            <person name="Nelson K.E."/>
            <person name="Weinel C."/>
            <person name="Paulsen I.T."/>
            <person name="Dodson R.J."/>
            <person name="Hilbert H."/>
            <person name="Martins dos Santos V.A.P."/>
            <person name="Fouts D.E."/>
            <person name="Gill S.R."/>
            <person name="Pop M."/>
            <person name="Holmes M."/>
            <person name="Brinkac L.M."/>
            <person name="Beanan M.J."/>
            <person name="DeBoy R.T."/>
            <person name="Daugherty S.C."/>
            <person name="Kolonay J.F."/>
            <person name="Madupu R."/>
            <person name="Nelson W.C."/>
            <person name="White O."/>
            <person name="Peterson J.D."/>
            <person name="Khouri H.M."/>
            <person name="Hance I."/>
            <person name="Chris Lee P."/>
            <person name="Holtzapple E.K."/>
            <person name="Scanlan D."/>
            <person name="Tran K."/>
            <person name="Moazzez A."/>
            <person name="Utterback T.R."/>
            <person name="Rizzo M."/>
            <person name="Lee K."/>
            <person name="Kosack D."/>
            <person name="Moestl D."/>
            <person name="Wedler H."/>
            <person name="Lauber J."/>
            <person name="Stjepandic D."/>
            <person name="Hoheisel J."/>
            <person name="Straetz M."/>
            <person name="Heim S."/>
            <person name="Kiewitz C."/>
            <person name="Eisen J.A."/>
            <person name="Timmis K.N."/>
            <person name="Duesterhoeft A."/>
            <person name="Tuemmler B."/>
            <person name="Fraser C.M."/>
        </authorList>
    </citation>
    <scope>NUCLEOTIDE SEQUENCE [LARGE SCALE GENOMIC DNA]</scope>
    <source>
        <strain>ATCC 47054 / DSM 6125 / CFBP 8728 / NCIMB 11950 / KT2440</strain>
    </source>
</reference>
<feature type="chain" id="PRO_0000261079" description="Ribose import ATP-binding protein RbsA">
    <location>
        <begin position="1"/>
        <end position="512"/>
    </location>
</feature>
<feature type="domain" description="ABC transporter 1" evidence="1">
    <location>
        <begin position="6"/>
        <end position="242"/>
    </location>
</feature>
<feature type="domain" description="ABC transporter 2" evidence="1">
    <location>
        <begin position="252"/>
        <end position="496"/>
    </location>
</feature>
<feature type="binding site" evidence="1">
    <location>
        <begin position="38"/>
        <end position="45"/>
    </location>
    <ligand>
        <name>ATP</name>
        <dbReference type="ChEBI" id="CHEBI:30616"/>
    </ligand>
</feature>
<comment type="function">
    <text evidence="1">Part of the ABC transporter complex RbsABC involved in ribose import. Responsible for energy coupling to the transport system.</text>
</comment>
<comment type="catalytic activity">
    <reaction evidence="1">
        <text>D-ribose(out) + ATP + H2O = D-ribose(in) + ADP + phosphate + H(+)</text>
        <dbReference type="Rhea" id="RHEA:29903"/>
        <dbReference type="ChEBI" id="CHEBI:15377"/>
        <dbReference type="ChEBI" id="CHEBI:15378"/>
        <dbReference type="ChEBI" id="CHEBI:30616"/>
        <dbReference type="ChEBI" id="CHEBI:43474"/>
        <dbReference type="ChEBI" id="CHEBI:47013"/>
        <dbReference type="ChEBI" id="CHEBI:456216"/>
        <dbReference type="EC" id="7.5.2.7"/>
    </reaction>
</comment>
<comment type="subunit">
    <text evidence="1">The complex is composed of an ATP-binding protein (RbsA), two transmembrane proteins (RbsC) and a solute-binding protein (RbsB).</text>
</comment>
<comment type="subcellular location">
    <subcellularLocation>
        <location evidence="1">Cell inner membrane</location>
        <topology evidence="1">Peripheral membrane protein</topology>
    </subcellularLocation>
</comment>
<comment type="similarity">
    <text evidence="1">Belongs to the ABC transporter superfamily. Ribose importer (TC 3.A.1.2.1) family.</text>
</comment>
<name>RBSA_PSEPK</name>
<organism>
    <name type="scientific">Pseudomonas putida (strain ATCC 47054 / DSM 6125 / CFBP 8728 / NCIMB 11950 / KT2440)</name>
    <dbReference type="NCBI Taxonomy" id="160488"/>
    <lineage>
        <taxon>Bacteria</taxon>
        <taxon>Pseudomonadati</taxon>
        <taxon>Pseudomonadota</taxon>
        <taxon>Gammaproteobacteria</taxon>
        <taxon>Pseudomonadales</taxon>
        <taxon>Pseudomonadaceae</taxon>
        <taxon>Pseudomonas</taxon>
    </lineage>
</organism>
<proteinExistence type="inferred from homology"/>
<protein>
    <recommendedName>
        <fullName evidence="1">Ribose import ATP-binding protein RbsA</fullName>
        <ecNumber evidence="1">7.5.2.7</ecNumber>
    </recommendedName>
</protein>
<dbReference type="EC" id="7.5.2.7" evidence="1"/>
<dbReference type="EMBL" id="AE015451">
    <property type="protein sequence ID" value="AAN68367.1"/>
    <property type="molecule type" value="Genomic_DNA"/>
</dbReference>
<dbReference type="RefSeq" id="NP_744903.1">
    <property type="nucleotide sequence ID" value="NC_002947.4"/>
</dbReference>
<dbReference type="RefSeq" id="WP_010953671.1">
    <property type="nucleotide sequence ID" value="NZ_CP169744.1"/>
</dbReference>
<dbReference type="SMR" id="Q88J90"/>
<dbReference type="STRING" id="160488.PP_2759"/>
<dbReference type="PaxDb" id="160488-PP_2759"/>
<dbReference type="KEGG" id="ppu:PP_2759"/>
<dbReference type="PATRIC" id="fig|160488.4.peg.2925"/>
<dbReference type="eggNOG" id="COG1129">
    <property type="taxonomic scope" value="Bacteria"/>
</dbReference>
<dbReference type="HOGENOM" id="CLU_000604_92_2_6"/>
<dbReference type="OrthoDB" id="9776369at2"/>
<dbReference type="PhylomeDB" id="Q88J90"/>
<dbReference type="BioCyc" id="PPUT160488:G1G01-2940-MONOMER"/>
<dbReference type="Proteomes" id="UP000000556">
    <property type="component" value="Chromosome"/>
</dbReference>
<dbReference type="GO" id="GO:0005886">
    <property type="term" value="C:plasma membrane"/>
    <property type="evidence" value="ECO:0007669"/>
    <property type="project" value="UniProtKB-SubCell"/>
</dbReference>
<dbReference type="GO" id="GO:0015611">
    <property type="term" value="F:ABC-type D-ribose transporter activity"/>
    <property type="evidence" value="ECO:0007669"/>
    <property type="project" value="UniProtKB-EC"/>
</dbReference>
<dbReference type="GO" id="GO:0005524">
    <property type="term" value="F:ATP binding"/>
    <property type="evidence" value="ECO:0007669"/>
    <property type="project" value="UniProtKB-KW"/>
</dbReference>
<dbReference type="GO" id="GO:0016887">
    <property type="term" value="F:ATP hydrolysis activity"/>
    <property type="evidence" value="ECO:0007669"/>
    <property type="project" value="InterPro"/>
</dbReference>
<dbReference type="CDD" id="cd03216">
    <property type="entry name" value="ABC_Carb_Monos_I"/>
    <property type="match status" value="1"/>
</dbReference>
<dbReference type="CDD" id="cd03215">
    <property type="entry name" value="ABC_Carb_Monos_II"/>
    <property type="match status" value="1"/>
</dbReference>
<dbReference type="Gene3D" id="3.40.50.300">
    <property type="entry name" value="P-loop containing nucleotide triphosphate hydrolases"/>
    <property type="match status" value="2"/>
</dbReference>
<dbReference type="InterPro" id="IPR003593">
    <property type="entry name" value="AAA+_ATPase"/>
</dbReference>
<dbReference type="InterPro" id="IPR050107">
    <property type="entry name" value="ABC_carbohydrate_import_ATPase"/>
</dbReference>
<dbReference type="InterPro" id="IPR003439">
    <property type="entry name" value="ABC_transporter-like_ATP-bd"/>
</dbReference>
<dbReference type="InterPro" id="IPR017871">
    <property type="entry name" value="ABC_transporter-like_CS"/>
</dbReference>
<dbReference type="InterPro" id="IPR027417">
    <property type="entry name" value="P-loop_NTPase"/>
</dbReference>
<dbReference type="PANTHER" id="PTHR43790">
    <property type="entry name" value="CARBOHYDRATE TRANSPORT ATP-BINDING PROTEIN MG119-RELATED"/>
    <property type="match status" value="1"/>
</dbReference>
<dbReference type="PANTHER" id="PTHR43790:SF3">
    <property type="entry name" value="D-ALLOSE IMPORT ATP-BINDING PROTEIN ALSA-RELATED"/>
    <property type="match status" value="1"/>
</dbReference>
<dbReference type="Pfam" id="PF00005">
    <property type="entry name" value="ABC_tran"/>
    <property type="match status" value="2"/>
</dbReference>
<dbReference type="SMART" id="SM00382">
    <property type="entry name" value="AAA"/>
    <property type="match status" value="2"/>
</dbReference>
<dbReference type="SUPFAM" id="SSF52540">
    <property type="entry name" value="P-loop containing nucleoside triphosphate hydrolases"/>
    <property type="match status" value="2"/>
</dbReference>
<dbReference type="PROSITE" id="PS00211">
    <property type="entry name" value="ABC_TRANSPORTER_1"/>
    <property type="match status" value="1"/>
</dbReference>
<dbReference type="PROSITE" id="PS50893">
    <property type="entry name" value="ABC_TRANSPORTER_2"/>
    <property type="match status" value="2"/>
</dbReference>
<dbReference type="PROSITE" id="PS51254">
    <property type="entry name" value="RBSA"/>
    <property type="match status" value="1"/>
</dbReference>
<accession>Q88J90</accession>